<gene>
    <name evidence="1" type="primary">argJ</name>
    <name type="ordered locus">RSc2833</name>
    <name type="ORF">RS00272</name>
</gene>
<reference key="1">
    <citation type="journal article" date="2002" name="Nature">
        <title>Genome sequence of the plant pathogen Ralstonia solanacearum.</title>
        <authorList>
            <person name="Salanoubat M."/>
            <person name="Genin S."/>
            <person name="Artiguenave F."/>
            <person name="Gouzy J."/>
            <person name="Mangenot S."/>
            <person name="Arlat M."/>
            <person name="Billault A."/>
            <person name="Brottier P."/>
            <person name="Camus J.-C."/>
            <person name="Cattolico L."/>
            <person name="Chandler M."/>
            <person name="Choisne N."/>
            <person name="Claudel-Renard C."/>
            <person name="Cunnac S."/>
            <person name="Demange N."/>
            <person name="Gaspin C."/>
            <person name="Lavie M."/>
            <person name="Moisan A."/>
            <person name="Robert C."/>
            <person name="Saurin W."/>
            <person name="Schiex T."/>
            <person name="Siguier P."/>
            <person name="Thebault P."/>
            <person name="Whalen M."/>
            <person name="Wincker P."/>
            <person name="Levy M."/>
            <person name="Weissenbach J."/>
            <person name="Boucher C.A."/>
        </authorList>
    </citation>
    <scope>NUCLEOTIDE SEQUENCE [LARGE SCALE GENOMIC DNA]</scope>
    <source>
        <strain>ATCC BAA-1114 / GMI1000</strain>
    </source>
</reference>
<feature type="chain" id="PRO_0000002219" description="Arginine biosynthesis bifunctional protein ArgJ alpha chain" evidence="1">
    <location>
        <begin position="1"/>
        <end position="192"/>
    </location>
</feature>
<feature type="chain" id="PRO_0000002220" description="Arginine biosynthesis bifunctional protein ArgJ beta chain" evidence="1">
    <location>
        <begin position="193"/>
        <end position="409"/>
    </location>
</feature>
<feature type="active site" description="Nucleophile" evidence="1">
    <location>
        <position position="193"/>
    </location>
</feature>
<feature type="binding site" evidence="1">
    <location>
        <position position="156"/>
    </location>
    <ligand>
        <name>substrate</name>
    </ligand>
</feature>
<feature type="binding site" evidence="1">
    <location>
        <position position="182"/>
    </location>
    <ligand>
        <name>substrate</name>
    </ligand>
</feature>
<feature type="binding site" evidence="1">
    <location>
        <position position="193"/>
    </location>
    <ligand>
        <name>substrate</name>
    </ligand>
</feature>
<feature type="binding site" evidence="1">
    <location>
        <position position="280"/>
    </location>
    <ligand>
        <name>substrate</name>
    </ligand>
</feature>
<feature type="binding site" evidence="1">
    <location>
        <position position="404"/>
    </location>
    <ligand>
        <name>substrate</name>
    </ligand>
</feature>
<feature type="binding site" evidence="1">
    <location>
        <position position="409"/>
    </location>
    <ligand>
        <name>substrate</name>
    </ligand>
</feature>
<feature type="site" description="Involved in the stabilization of negative charge on the oxyanion by the formation of the oxyanion hole" evidence="1">
    <location>
        <position position="119"/>
    </location>
</feature>
<feature type="site" description="Involved in the stabilization of negative charge on the oxyanion by the formation of the oxyanion hole" evidence="1">
    <location>
        <position position="120"/>
    </location>
</feature>
<feature type="site" description="Cleavage; by autolysis" evidence="1">
    <location>
        <begin position="192"/>
        <end position="193"/>
    </location>
</feature>
<keyword id="KW-0012">Acyltransferase</keyword>
<keyword id="KW-0028">Amino-acid biosynthesis</keyword>
<keyword id="KW-0055">Arginine biosynthesis</keyword>
<keyword id="KW-0068">Autocatalytic cleavage</keyword>
<keyword id="KW-0963">Cytoplasm</keyword>
<keyword id="KW-0511">Multifunctional enzyme</keyword>
<keyword id="KW-1185">Reference proteome</keyword>
<keyword id="KW-0808">Transferase</keyword>
<comment type="function">
    <text evidence="1">Catalyzes two activities which are involved in the cyclic version of arginine biosynthesis: the synthesis of N-acetylglutamate from glutamate and acetyl-CoA as the acetyl donor, and of ornithine by transacetylation between N(2)-acetylornithine and glutamate.</text>
</comment>
<comment type="catalytic activity">
    <reaction evidence="1">
        <text>N(2)-acetyl-L-ornithine + L-glutamate = N-acetyl-L-glutamate + L-ornithine</text>
        <dbReference type="Rhea" id="RHEA:15349"/>
        <dbReference type="ChEBI" id="CHEBI:29985"/>
        <dbReference type="ChEBI" id="CHEBI:44337"/>
        <dbReference type="ChEBI" id="CHEBI:46911"/>
        <dbReference type="ChEBI" id="CHEBI:57805"/>
        <dbReference type="EC" id="2.3.1.35"/>
    </reaction>
</comment>
<comment type="catalytic activity">
    <reaction evidence="1">
        <text>L-glutamate + acetyl-CoA = N-acetyl-L-glutamate + CoA + H(+)</text>
        <dbReference type="Rhea" id="RHEA:24292"/>
        <dbReference type="ChEBI" id="CHEBI:15378"/>
        <dbReference type="ChEBI" id="CHEBI:29985"/>
        <dbReference type="ChEBI" id="CHEBI:44337"/>
        <dbReference type="ChEBI" id="CHEBI:57287"/>
        <dbReference type="ChEBI" id="CHEBI:57288"/>
        <dbReference type="EC" id="2.3.1.1"/>
    </reaction>
</comment>
<comment type="pathway">
    <text evidence="1">Amino-acid biosynthesis; L-arginine biosynthesis; L-ornithine and N-acetyl-L-glutamate from L-glutamate and N(2)-acetyl-L-ornithine (cyclic): step 1/1.</text>
</comment>
<comment type="pathway">
    <text evidence="1">Amino-acid biosynthesis; L-arginine biosynthesis; N(2)-acetyl-L-ornithine from L-glutamate: step 1/4.</text>
</comment>
<comment type="subunit">
    <text evidence="1">Heterotetramer of two alpha and two beta chains.</text>
</comment>
<comment type="subcellular location">
    <subcellularLocation>
        <location evidence="1">Cytoplasm</location>
    </subcellularLocation>
</comment>
<comment type="similarity">
    <text evidence="1">Belongs to the ArgJ family.</text>
</comment>
<protein>
    <recommendedName>
        <fullName evidence="1">Arginine biosynthesis bifunctional protein ArgJ</fullName>
    </recommendedName>
    <domain>
        <recommendedName>
            <fullName evidence="1">Glutamate N-acetyltransferase</fullName>
            <ecNumber evidence="1">2.3.1.35</ecNumber>
        </recommendedName>
        <alternativeName>
            <fullName evidence="1">Ornithine acetyltransferase</fullName>
            <shortName evidence="1">OATase</shortName>
        </alternativeName>
        <alternativeName>
            <fullName evidence="1">Ornithine transacetylase</fullName>
        </alternativeName>
    </domain>
    <domain>
        <recommendedName>
            <fullName evidence="1">Amino-acid acetyltransferase</fullName>
            <ecNumber evidence="1">2.3.1.1</ecNumber>
        </recommendedName>
        <alternativeName>
            <fullName evidence="1">N-acetylglutamate synthase</fullName>
            <shortName evidence="1">AGSase</shortName>
        </alternativeName>
    </domain>
    <component>
        <recommendedName>
            <fullName evidence="1">Arginine biosynthesis bifunctional protein ArgJ alpha chain</fullName>
        </recommendedName>
    </component>
    <component>
        <recommendedName>
            <fullName evidence="1">Arginine biosynthesis bifunctional protein ArgJ beta chain</fullName>
        </recommendedName>
    </component>
</protein>
<evidence type="ECO:0000255" key="1">
    <source>
        <dbReference type="HAMAP-Rule" id="MF_01106"/>
    </source>
</evidence>
<accession>Q8XVJ7</accession>
<organism>
    <name type="scientific">Ralstonia nicotianae (strain ATCC BAA-1114 / GMI1000)</name>
    <name type="common">Ralstonia solanacearum</name>
    <dbReference type="NCBI Taxonomy" id="267608"/>
    <lineage>
        <taxon>Bacteria</taxon>
        <taxon>Pseudomonadati</taxon>
        <taxon>Pseudomonadota</taxon>
        <taxon>Betaproteobacteria</taxon>
        <taxon>Burkholderiales</taxon>
        <taxon>Burkholderiaceae</taxon>
        <taxon>Ralstonia</taxon>
        <taxon>Ralstonia solanacearum species complex</taxon>
    </lineage>
</organism>
<sequence length="409" mass="42756">MAVNLVAPAADSLLPIDGVDLGWAEAGIRKANRKDVLLVRIAEGASVAGVFTQNRFCAAPVQVCREHLASGQGARAIVVNTGNANAGTGAPGLALARQTCEAVAGLLGIAPQQVLPFSTGVILEPLPVDRLIAGLPAAQANAKPDNWLAAAESIMTTDTVPKAASGTCTLSGKPVRLSGISKGAGMIRPNMATMLGFIATDANVDEAVLQGLVRHAADHSFNSVTVDGDTSTNDSFVVIATGRAGTPRIDSESHPDYAALRDALTGLAQALAQKIVRDGEGATKFMTIRVEGGRSVDECRQVAYAVAHSPLVKTAFYASDPNLGRILAAVGYAGVNDLDVDGVNLWLDDVWVARDGGRNPDYREEDGQRVMKQAEITVRIALGRGDATATVWTCDFSHDYVSINADYRS</sequence>
<name>ARGJ_RALN1</name>
<dbReference type="EC" id="2.3.1.35" evidence="1"/>
<dbReference type="EC" id="2.3.1.1" evidence="1"/>
<dbReference type="EMBL" id="AL646052">
    <property type="protein sequence ID" value="CAD16540.1"/>
    <property type="molecule type" value="Genomic_DNA"/>
</dbReference>
<dbReference type="RefSeq" id="WP_011002739.1">
    <property type="nucleotide sequence ID" value="NC_003295.1"/>
</dbReference>
<dbReference type="SMR" id="Q8XVJ7"/>
<dbReference type="STRING" id="267608.RSc2833"/>
<dbReference type="MEROPS" id="T05.001"/>
<dbReference type="EnsemblBacteria" id="CAD16540">
    <property type="protein sequence ID" value="CAD16540"/>
    <property type="gene ID" value="RSc2833"/>
</dbReference>
<dbReference type="KEGG" id="rso:RSc2833"/>
<dbReference type="eggNOG" id="COG1364">
    <property type="taxonomic scope" value="Bacteria"/>
</dbReference>
<dbReference type="HOGENOM" id="CLU_027172_1_0_4"/>
<dbReference type="UniPathway" id="UPA00068">
    <property type="reaction ID" value="UER00106"/>
</dbReference>
<dbReference type="UniPathway" id="UPA00068">
    <property type="reaction ID" value="UER00111"/>
</dbReference>
<dbReference type="Proteomes" id="UP000001436">
    <property type="component" value="Chromosome"/>
</dbReference>
<dbReference type="GO" id="GO:0005737">
    <property type="term" value="C:cytoplasm"/>
    <property type="evidence" value="ECO:0007669"/>
    <property type="project" value="UniProtKB-SubCell"/>
</dbReference>
<dbReference type="GO" id="GO:0004358">
    <property type="term" value="F:glutamate N-acetyltransferase activity"/>
    <property type="evidence" value="ECO:0007669"/>
    <property type="project" value="UniProtKB-UniRule"/>
</dbReference>
<dbReference type="GO" id="GO:0004042">
    <property type="term" value="F:L-glutamate N-acetyltransferase activity"/>
    <property type="evidence" value="ECO:0007669"/>
    <property type="project" value="UniProtKB-UniRule"/>
</dbReference>
<dbReference type="GO" id="GO:0006526">
    <property type="term" value="P:L-arginine biosynthetic process"/>
    <property type="evidence" value="ECO:0007669"/>
    <property type="project" value="UniProtKB-UniRule"/>
</dbReference>
<dbReference type="GO" id="GO:0006592">
    <property type="term" value="P:ornithine biosynthetic process"/>
    <property type="evidence" value="ECO:0007669"/>
    <property type="project" value="TreeGrafter"/>
</dbReference>
<dbReference type="CDD" id="cd02152">
    <property type="entry name" value="OAT"/>
    <property type="match status" value="1"/>
</dbReference>
<dbReference type="FunFam" id="3.10.20.340:FF:000001">
    <property type="entry name" value="Arginine biosynthesis bifunctional protein ArgJ, chloroplastic"/>
    <property type="match status" value="1"/>
</dbReference>
<dbReference type="FunFam" id="3.60.70.12:FF:000001">
    <property type="entry name" value="Arginine biosynthesis bifunctional protein ArgJ, chloroplastic"/>
    <property type="match status" value="1"/>
</dbReference>
<dbReference type="Gene3D" id="3.10.20.340">
    <property type="entry name" value="ArgJ beta chain, C-terminal domain"/>
    <property type="match status" value="1"/>
</dbReference>
<dbReference type="Gene3D" id="3.60.70.12">
    <property type="entry name" value="L-amino peptidase D-ALA esterase/amidase"/>
    <property type="match status" value="1"/>
</dbReference>
<dbReference type="HAMAP" id="MF_01106">
    <property type="entry name" value="ArgJ"/>
    <property type="match status" value="1"/>
</dbReference>
<dbReference type="InterPro" id="IPR002813">
    <property type="entry name" value="Arg_biosynth_ArgJ"/>
</dbReference>
<dbReference type="InterPro" id="IPR016117">
    <property type="entry name" value="ArgJ-like_dom_sf"/>
</dbReference>
<dbReference type="InterPro" id="IPR042195">
    <property type="entry name" value="ArgJ_beta_C"/>
</dbReference>
<dbReference type="NCBIfam" id="TIGR00120">
    <property type="entry name" value="ArgJ"/>
    <property type="match status" value="1"/>
</dbReference>
<dbReference type="NCBIfam" id="NF003802">
    <property type="entry name" value="PRK05388.1"/>
    <property type="match status" value="1"/>
</dbReference>
<dbReference type="PANTHER" id="PTHR23100">
    <property type="entry name" value="ARGININE BIOSYNTHESIS BIFUNCTIONAL PROTEIN ARGJ"/>
    <property type="match status" value="1"/>
</dbReference>
<dbReference type="PANTHER" id="PTHR23100:SF0">
    <property type="entry name" value="ARGININE BIOSYNTHESIS BIFUNCTIONAL PROTEIN ARGJ, MITOCHONDRIAL"/>
    <property type="match status" value="1"/>
</dbReference>
<dbReference type="Pfam" id="PF01960">
    <property type="entry name" value="ArgJ"/>
    <property type="match status" value="1"/>
</dbReference>
<dbReference type="SUPFAM" id="SSF56266">
    <property type="entry name" value="DmpA/ArgJ-like"/>
    <property type="match status" value="1"/>
</dbReference>
<proteinExistence type="inferred from homology"/>